<sequence length="200" mass="22274">MIGRMVGLEPSSRSGVLEECRECRAIVMKGDGVQTPLHKGDSILGGEGACLMRYAAWTLISAVDVVYCSLETRESVSLTFNPDGQVIVVPFMFKGYNIAALPTTKFGDLKKDTKQIENVVSFLRSDICYAVWEFLVSSVQYKDDDRFERLFDERMRGYLRNISEGTSKVYMRGNKTFSELLEMVCGRMLECSGRVAGGGA</sequence>
<comment type="similarity">
    <text evidence="1">Belongs to the UPF0329 family.</text>
</comment>
<name>Y6G7_ENCCU</name>
<evidence type="ECO:0000305" key="1"/>
<reference key="1">
    <citation type="journal article" date="2001" name="Nature">
        <title>Genome sequence and gene compaction of the eukaryote parasite Encephalitozoon cuniculi.</title>
        <authorList>
            <person name="Katinka M.D."/>
            <person name="Duprat S."/>
            <person name="Cornillot E."/>
            <person name="Metenier G."/>
            <person name="Thomarat F."/>
            <person name="Prensier G."/>
            <person name="Barbe V."/>
            <person name="Peyretaillade E."/>
            <person name="Brottier P."/>
            <person name="Wincker P."/>
            <person name="Delbac F."/>
            <person name="El Alaoui H."/>
            <person name="Peyret P."/>
            <person name="Saurin W."/>
            <person name="Gouy M."/>
            <person name="Weissenbach J."/>
            <person name="Vivares C.P."/>
        </authorList>
    </citation>
    <scope>NUCLEOTIDE SEQUENCE [LARGE SCALE GENOMIC DNA]</scope>
    <source>
        <strain>GB-M1</strain>
    </source>
</reference>
<keyword id="KW-1185">Reference proteome</keyword>
<proteinExistence type="inferred from homology"/>
<gene>
    <name type="ordered locus">ECU06_1670</name>
</gene>
<dbReference type="EMBL" id="AL590446">
    <property type="protein sequence ID" value="CAD25528.1"/>
    <property type="molecule type" value="Genomic_DNA"/>
</dbReference>
<dbReference type="RefSeq" id="NP_585924.1">
    <property type="nucleotide sequence ID" value="NM_001041546.1"/>
</dbReference>
<dbReference type="STRING" id="284813.Q8SV58"/>
<dbReference type="GeneID" id="859352"/>
<dbReference type="KEGG" id="ecu:ECU06_1670"/>
<dbReference type="VEuPathDB" id="MicrosporidiaDB:ECU06_1670"/>
<dbReference type="HOGENOM" id="CLU_118192_0_0_1"/>
<dbReference type="InParanoid" id="Q8SV58"/>
<dbReference type="OrthoDB" id="2162691at2759"/>
<dbReference type="Proteomes" id="UP000000819">
    <property type="component" value="Chromosome VI"/>
</dbReference>
<feature type="chain" id="PRO_0000223167" description="UPF0329 protein ECU06_1670">
    <location>
        <begin position="1"/>
        <end position="200"/>
    </location>
</feature>
<organism>
    <name type="scientific">Encephalitozoon cuniculi (strain GB-M1)</name>
    <name type="common">Microsporidian parasite</name>
    <dbReference type="NCBI Taxonomy" id="284813"/>
    <lineage>
        <taxon>Eukaryota</taxon>
        <taxon>Fungi</taxon>
        <taxon>Fungi incertae sedis</taxon>
        <taxon>Microsporidia</taxon>
        <taxon>Unikaryonidae</taxon>
        <taxon>Encephalitozoon</taxon>
    </lineage>
</organism>
<protein>
    <recommendedName>
        <fullName>UPF0329 protein ECU06_1670</fullName>
    </recommendedName>
</protein>
<accession>Q8SV58</accession>